<feature type="chain" id="PRO_0000263327" description="Peptide chain release factor 1">
    <location>
        <begin position="1"/>
        <end position="360"/>
    </location>
</feature>
<feature type="modified residue" description="N5-methylglutamine" evidence="1">
    <location>
        <position position="235"/>
    </location>
</feature>
<keyword id="KW-0963">Cytoplasm</keyword>
<keyword id="KW-0488">Methylation</keyword>
<keyword id="KW-0648">Protein biosynthesis</keyword>
<sequence length="360" mass="39991">MKASMLAKLDQLAERLEEVNALLAREDATANIDQYRKLSREHAELSPVAEQYGFYRQAQDDLATAQALLDDPEMKDFAADEIASARERLESLEGSLQKLLLPKDPNDDRNLILEIRAGTGGEESALFAGDLLRMYTRFAERQRWQVEIMSESESDLGGYKEVIVRIAGDAAFSRLKFESGGHRVQRVPATEAQGRIHTSACTVAVMPEADEVGDVEINPSDLRIDTFRASGAGGQHVNKTDSAVRLTHLPTGIVVECQDDRSQHRNKDKAMKVLAARIKDQQMRAAQAKEASTRRNLIGSGDRSDRIRTYNFPQGRVTDHRINLTLYKIDMIMDGDLEELVSALAAEHQADQLAALGEDS</sequence>
<proteinExistence type="inferred from homology"/>
<dbReference type="EMBL" id="CP000090">
    <property type="protein sequence ID" value="AAZ62404.1"/>
    <property type="molecule type" value="Genomic_DNA"/>
</dbReference>
<dbReference type="SMR" id="Q46WS9"/>
<dbReference type="STRING" id="264198.Reut_A3044"/>
<dbReference type="KEGG" id="reu:Reut_A3044"/>
<dbReference type="eggNOG" id="COG0216">
    <property type="taxonomic scope" value="Bacteria"/>
</dbReference>
<dbReference type="HOGENOM" id="CLU_036856_0_1_4"/>
<dbReference type="OrthoDB" id="9806673at2"/>
<dbReference type="GO" id="GO:0005737">
    <property type="term" value="C:cytoplasm"/>
    <property type="evidence" value="ECO:0007669"/>
    <property type="project" value="UniProtKB-SubCell"/>
</dbReference>
<dbReference type="GO" id="GO:0016149">
    <property type="term" value="F:translation release factor activity, codon specific"/>
    <property type="evidence" value="ECO:0007669"/>
    <property type="project" value="UniProtKB-UniRule"/>
</dbReference>
<dbReference type="FunFam" id="3.30.160.20:FF:000004">
    <property type="entry name" value="Peptide chain release factor 1"/>
    <property type="match status" value="1"/>
</dbReference>
<dbReference type="FunFam" id="3.30.70.1660:FF:000002">
    <property type="entry name" value="Peptide chain release factor 1"/>
    <property type="match status" value="1"/>
</dbReference>
<dbReference type="FunFam" id="3.30.70.1660:FF:000004">
    <property type="entry name" value="Peptide chain release factor 1"/>
    <property type="match status" value="1"/>
</dbReference>
<dbReference type="Gene3D" id="3.30.160.20">
    <property type="match status" value="1"/>
</dbReference>
<dbReference type="Gene3D" id="3.30.70.1660">
    <property type="match status" value="1"/>
</dbReference>
<dbReference type="Gene3D" id="6.10.140.1950">
    <property type="match status" value="1"/>
</dbReference>
<dbReference type="HAMAP" id="MF_00093">
    <property type="entry name" value="Rel_fac_1"/>
    <property type="match status" value="1"/>
</dbReference>
<dbReference type="InterPro" id="IPR005139">
    <property type="entry name" value="PCRF"/>
</dbReference>
<dbReference type="InterPro" id="IPR000352">
    <property type="entry name" value="Pep_chain_release_fac_I"/>
</dbReference>
<dbReference type="InterPro" id="IPR045853">
    <property type="entry name" value="Pep_chain_release_fac_I_sf"/>
</dbReference>
<dbReference type="InterPro" id="IPR050057">
    <property type="entry name" value="Prokaryotic/Mito_RF"/>
</dbReference>
<dbReference type="InterPro" id="IPR004373">
    <property type="entry name" value="RF-1"/>
</dbReference>
<dbReference type="NCBIfam" id="TIGR00019">
    <property type="entry name" value="prfA"/>
    <property type="match status" value="1"/>
</dbReference>
<dbReference type="NCBIfam" id="NF001859">
    <property type="entry name" value="PRK00591.1"/>
    <property type="match status" value="1"/>
</dbReference>
<dbReference type="PANTHER" id="PTHR43804">
    <property type="entry name" value="LD18447P"/>
    <property type="match status" value="1"/>
</dbReference>
<dbReference type="PANTHER" id="PTHR43804:SF7">
    <property type="entry name" value="LD18447P"/>
    <property type="match status" value="1"/>
</dbReference>
<dbReference type="Pfam" id="PF03462">
    <property type="entry name" value="PCRF"/>
    <property type="match status" value="1"/>
</dbReference>
<dbReference type="Pfam" id="PF00472">
    <property type="entry name" value="RF-1"/>
    <property type="match status" value="1"/>
</dbReference>
<dbReference type="SMART" id="SM00937">
    <property type="entry name" value="PCRF"/>
    <property type="match status" value="1"/>
</dbReference>
<dbReference type="SUPFAM" id="SSF75620">
    <property type="entry name" value="Release factor"/>
    <property type="match status" value="1"/>
</dbReference>
<dbReference type="PROSITE" id="PS00745">
    <property type="entry name" value="RF_PROK_I"/>
    <property type="match status" value="1"/>
</dbReference>
<protein>
    <recommendedName>
        <fullName evidence="1">Peptide chain release factor 1</fullName>
        <shortName evidence="1">RF-1</shortName>
    </recommendedName>
</protein>
<evidence type="ECO:0000255" key="1">
    <source>
        <dbReference type="HAMAP-Rule" id="MF_00093"/>
    </source>
</evidence>
<name>RF1_CUPPJ</name>
<gene>
    <name evidence="1" type="primary">prfA</name>
    <name type="ordered locus">Reut_A3044</name>
</gene>
<organism>
    <name type="scientific">Cupriavidus pinatubonensis (strain JMP 134 / LMG 1197)</name>
    <name type="common">Cupriavidus necator (strain JMP 134)</name>
    <dbReference type="NCBI Taxonomy" id="264198"/>
    <lineage>
        <taxon>Bacteria</taxon>
        <taxon>Pseudomonadati</taxon>
        <taxon>Pseudomonadota</taxon>
        <taxon>Betaproteobacteria</taxon>
        <taxon>Burkholderiales</taxon>
        <taxon>Burkholderiaceae</taxon>
        <taxon>Cupriavidus</taxon>
    </lineage>
</organism>
<reference key="1">
    <citation type="journal article" date="2010" name="PLoS ONE">
        <title>The complete multipartite genome sequence of Cupriavidus necator JMP134, a versatile pollutant degrader.</title>
        <authorList>
            <person name="Lykidis A."/>
            <person name="Perez-Pantoja D."/>
            <person name="Ledger T."/>
            <person name="Mavromatis K."/>
            <person name="Anderson I.J."/>
            <person name="Ivanova N.N."/>
            <person name="Hooper S.D."/>
            <person name="Lapidus A."/>
            <person name="Lucas S."/>
            <person name="Gonzalez B."/>
            <person name="Kyrpides N.C."/>
        </authorList>
    </citation>
    <scope>NUCLEOTIDE SEQUENCE [LARGE SCALE GENOMIC DNA]</scope>
    <source>
        <strain>JMP134 / LMG 1197</strain>
    </source>
</reference>
<comment type="function">
    <text evidence="1">Peptide chain release factor 1 directs the termination of translation in response to the peptide chain termination codons UAG and UAA.</text>
</comment>
<comment type="subcellular location">
    <subcellularLocation>
        <location evidence="1">Cytoplasm</location>
    </subcellularLocation>
</comment>
<comment type="PTM">
    <text evidence="1">Methylated by PrmC. Methylation increases the termination efficiency of RF1.</text>
</comment>
<comment type="similarity">
    <text evidence="1">Belongs to the prokaryotic/mitochondrial release factor family.</text>
</comment>
<accession>Q46WS9</accession>